<proteinExistence type="inferred from homology"/>
<comment type="function">
    <text evidence="1">Plays a role in virus cell tropism, and may be required for efficient virus replication in macrophages.</text>
</comment>
<comment type="similarity">
    <text evidence="2">Belongs to the asfivirus MGF 360 family.</text>
</comment>
<organismHost>
    <name type="scientific">Ornithodoros</name>
    <name type="common">relapsing fever ticks</name>
    <dbReference type="NCBI Taxonomy" id="6937"/>
</organismHost>
<organismHost>
    <name type="scientific">Phacochoerus aethiopicus</name>
    <name type="common">Warthog</name>
    <dbReference type="NCBI Taxonomy" id="85517"/>
</organismHost>
<organismHost>
    <name type="scientific">Phacochoerus africanus</name>
    <name type="common">Warthog</name>
    <dbReference type="NCBI Taxonomy" id="41426"/>
</organismHost>
<organismHost>
    <name type="scientific">Potamochoerus larvatus</name>
    <name type="common">Bushpig</name>
    <dbReference type="NCBI Taxonomy" id="273792"/>
</organismHost>
<organismHost>
    <name type="scientific">Sus scrofa</name>
    <name type="common">Pig</name>
    <dbReference type="NCBI Taxonomy" id="9823"/>
</organismHost>
<accession>P0C9N5</accession>
<reference key="1">
    <citation type="submission" date="2003-03" db="EMBL/GenBank/DDBJ databases">
        <title>African swine fever virus genomes.</title>
        <authorList>
            <person name="Kutish G.F."/>
            <person name="Rock D.L."/>
        </authorList>
    </citation>
    <scope>NUCLEOTIDE SEQUENCE [LARGE SCALE GENOMIC DNA]</scope>
</reference>
<dbReference type="EMBL" id="AY261360">
    <property type="status" value="NOT_ANNOTATED_CDS"/>
    <property type="molecule type" value="Genomic_DNA"/>
</dbReference>
<dbReference type="SMR" id="P0C9N5"/>
<dbReference type="Proteomes" id="UP000000861">
    <property type="component" value="Segment"/>
</dbReference>
<dbReference type="GO" id="GO:0042330">
    <property type="term" value="P:taxis"/>
    <property type="evidence" value="ECO:0007669"/>
    <property type="project" value="InterPro"/>
</dbReference>
<dbReference type="InterPro" id="IPR002595">
    <property type="entry name" value="ASFV_MGF360"/>
</dbReference>
<dbReference type="Pfam" id="PF01671">
    <property type="entry name" value="ASFV_360"/>
    <property type="match status" value="1"/>
</dbReference>
<protein>
    <recommendedName>
        <fullName>Protein MGF 360-7L</fullName>
    </recommendedName>
</protein>
<name>3607L_ASFK5</name>
<organism>
    <name type="scientific">African swine fever virus (isolate Pig/Kenya/KEN-50/1950)</name>
    <name type="common">ASFV</name>
    <dbReference type="NCBI Taxonomy" id="561445"/>
    <lineage>
        <taxon>Viruses</taxon>
        <taxon>Varidnaviria</taxon>
        <taxon>Bamfordvirae</taxon>
        <taxon>Nucleocytoviricota</taxon>
        <taxon>Pokkesviricetes</taxon>
        <taxon>Asfuvirales</taxon>
        <taxon>Asfarviridae</taxon>
        <taxon>Asfivirus</taxon>
        <taxon>African swine fever virus</taxon>
    </lineage>
</organism>
<feature type="chain" id="PRO_0000373262" description="Protein MGF 360-7L">
    <location>
        <begin position="1"/>
        <end position="376"/>
    </location>
</feature>
<gene>
    <name type="ordered locus">Ken-025</name>
</gene>
<evidence type="ECO:0000250" key="1"/>
<evidence type="ECO:0000305" key="2"/>
<sequence length="376" mass="44067">MNSLQVLTKKVLIENKAFSNYHEDDSFILQQLGLWWENGPIGFCKQCKMVISGSMSCSDVDSYELDRALVKAVKENQTDLIKLFVLWNADINYGIMCAKTERTKVLCIQLGANPEFLDNKKLYNMFVNLVRQQKVLLAIDIYYDNILILDSFGSHDFHALINFIYNGYILNLDEKEKMTRNTLVLKFWYKLAIEFNLIKPIRFLSKKFPHLDDWRLKTAVYLGNVDEIHHAYFQENIRLEPNHMMSLACMYPQNKLGIYYCFALGANINTALETLIRFINHEVYREITFFSNYGIWSNIHFCISLGANPDTKKIQETLLREEKNVIMKLLFKKGFLGPHSILHKKILEPSEVRKIISTYEYTETFHSFSSLRDNLR</sequence>